<comment type="function">
    <text evidence="7 8 12">Neu5Ac(alpha2-6)Gal/GalNAc specific agglutinin (PubMed:12023903). Behaves as a type-2 ribosome-inactivating protein (PubMed:12023903). Strongly inhibits mammalian but not plant ribosomes (PubMed:12023903). The A chain is responsible for inhibiting protein synthesis through the catalytic inactivation of 60S ribosomal subunits by removing adenine from position 4,324 of 28S rRNA (Probable). The B chain binds to cell receptors and probably facilitates the entry into the cell of the A chain; B chains are also responsible for cell agglutination (lectin activity) (Probable). Involved in plant defense against insects (PubMed:18951590).</text>
</comment>
<comment type="function">
    <molecule>TrSNAIf</molecule>
    <text evidence="9">Binds Neu5Ac(alpha2-6)Gal/GalNAc but has no clear agglutination activity.</text>
</comment>
<comment type="catalytic activity">
    <reaction evidence="6">
        <text>Endohydrolysis of the N-glycosidic bond at one specific adenosine on the 28S rRNA.</text>
        <dbReference type="EC" id="3.2.2.22"/>
    </reaction>
</comment>
<comment type="subunit">
    <text evidence="13">Tetramer of four pairs of disulfide bound A-B chains.</text>
</comment>
<comment type="tissue specificity">
    <text evidence="9">Expressed in fruits.</text>
</comment>
<comment type="domain">
    <text evidence="7">The B-chain consists of six tandemly repeated subdomains. Only subdomains 1-alpha and 2-gamma possess a functional carbohydrate-binding site.</text>
</comment>
<comment type="PTM">
    <text evidence="9">The precursor is processed in two chains, A and B, that are linked by a disulfide bond (PubMed:9541002). A small truncated form corresponding roughly to the second ricin B-type lectin domain of the B chain, TrSNAIf, can also be produced (PubMed:9541002).</text>
</comment>
<comment type="PTM">
    <text evidence="3">N-glycosylated.</text>
</comment>
<comment type="similarity">
    <text evidence="12">Belongs to the ribosome-inactivating protein family. Type 2 RIP subfamily.</text>
</comment>
<proteinExistence type="evidence at protein level"/>
<name>SNAIF_SAMNI</name>
<gene>
    <name evidence="10" type="primary">SNA-If</name>
    <name evidence="11" type="synonym">LECSNA-If</name>
    <name evidence="11" type="synonym">SNAIf</name>
</gene>
<feature type="signal peptide" evidence="3">
    <location>
        <begin position="1"/>
        <end position="28"/>
    </location>
</feature>
<feature type="chain" id="PRO_0000437975" description="SNAIf-A chain" evidence="3">
    <location>
        <begin position="29"/>
        <end position="289"/>
    </location>
</feature>
<feature type="peptide" id="PRO_0000437976" description="Linker peptide" evidence="2">
    <location>
        <begin position="290"/>
        <end position="308"/>
    </location>
</feature>
<feature type="chain" id="PRO_0000437977" description="SNAIf-B chain" evidence="3">
    <location>
        <begin position="309"/>
        <end position="570"/>
    </location>
</feature>
<feature type="chain" id="PRO_0000437978" description="TrSNAIf" evidence="14">
    <location>
        <begin position="424"/>
        <end position="570"/>
    </location>
</feature>
<feature type="domain" description="Ricin B-type lectin 1" evidence="4">
    <location>
        <begin position="319"/>
        <end position="439"/>
    </location>
</feature>
<feature type="repeat" description="1-alpha" evidence="13">
    <location>
        <begin position="329"/>
        <end position="369"/>
    </location>
</feature>
<feature type="repeat" description="1-beta" evidence="13">
    <location>
        <begin position="370"/>
        <end position="405"/>
    </location>
</feature>
<feature type="repeat" description="1-gamma" evidence="13">
    <location>
        <begin position="408"/>
        <end position="440"/>
    </location>
</feature>
<feature type="domain" description="Ricin B-type lectin 2" evidence="4">
    <location>
        <begin position="441"/>
        <end position="566"/>
    </location>
</feature>
<feature type="repeat" description="2-alpha" evidence="13">
    <location>
        <begin position="452"/>
        <end position="489"/>
    </location>
</feature>
<feature type="repeat" description="2-beta" evidence="13">
    <location>
        <begin position="493"/>
        <end position="531"/>
    </location>
</feature>
<feature type="repeat" description="2-gamma" evidence="13">
    <location>
        <begin position="534"/>
        <end position="567"/>
    </location>
</feature>
<feature type="active site" evidence="1">
    <location>
        <position position="199"/>
    </location>
</feature>
<feature type="glycosylation site" description="N-linked (GlcNAc...) asparagine" evidence="5">
    <location>
        <position position="40"/>
    </location>
</feature>
<feature type="glycosylation site" description="N-linked (GlcNAc...) asparagine" evidence="5">
    <location>
        <position position="62"/>
    </location>
</feature>
<feature type="glycosylation site" description="N-linked (GlcNAc...) asparagine" evidence="5">
    <location>
        <position position="140"/>
    </location>
</feature>
<feature type="glycosylation site" description="N-linked (GlcNAc...) asparagine" evidence="5">
    <location>
        <position position="232"/>
    </location>
</feature>
<feature type="glycosylation site" description="N-linked (GlcNAc...) asparagine" evidence="5">
    <location>
        <position position="492"/>
    </location>
</feature>
<feature type="glycosylation site" description="N-linked (GlcNAc...) asparagine" evidence="5">
    <location>
        <position position="526"/>
    </location>
</feature>
<feature type="glycosylation site" description="N-linked (GlcNAc...) asparagine" evidence="5">
    <location>
        <position position="544"/>
    </location>
</feature>
<feature type="disulfide bond" description="Interchain (between A and B chains)" evidence="4">
    <location>
        <begin position="284"/>
        <end position="316"/>
    </location>
</feature>
<feature type="disulfide bond" evidence="4">
    <location>
        <begin position="332"/>
        <end position="351"/>
    </location>
</feature>
<feature type="disulfide bond" description="Interchain (between two adjacent B chains)" evidence="3">
    <location>
        <position position="355"/>
    </location>
</feature>
<feature type="disulfide bond" evidence="4">
    <location>
        <begin position="373"/>
        <end position="385"/>
    </location>
</feature>
<feature type="disulfide bond" evidence="4">
    <location>
        <begin position="455"/>
        <end position="470"/>
    </location>
</feature>
<feature type="disulfide bond" evidence="4">
    <location>
        <begin position="496"/>
        <end position="513"/>
    </location>
</feature>
<feature type="mutagenesis site" description="In SNA-If-M2; loss of carbohydrate-binding activity but no effect on RNA N-glycosylase activity; when associated with E-539." evidence="7">
    <original>N</original>
    <variation>S</variation>
    <location>
        <position position="356"/>
    </location>
</feature>
<feature type="mutagenesis site" description="In SNA-If-M1; strongly reduced lectin activity but no effect on RNA N-glycosylase activity." evidence="7">
    <original>D</original>
    <variation>E</variation>
    <location>
        <position position="539"/>
    </location>
</feature>
<reference key="1">
    <citation type="journal article" date="1998" name="FEBS Lett.">
        <title>Elderberry (Sambucus nigra) contains truncated Neu5Ac(alpha-2,6)Gal/GalNAc-binding type 2 ribosome-inactivating proteins.</title>
        <authorList>
            <person name="Peumans W.J."/>
            <person name="Roy S."/>
            <person name="Barre A."/>
            <person name="Rouge P."/>
            <person name="van Leuven F."/>
            <person name="van Damme E.J."/>
        </authorList>
    </citation>
    <scope>NUCLEOTIDE SEQUENCE [MRNA]</scope>
    <scope>FUNCTION (TRSNAIF)</scope>
    <scope>TISSUE SPECIFICITY</scope>
    <scope>PROTEOLYTIC PROCESSING</scope>
    <scope>PROTEIN SEQUENCE OF 424-442</scope>
    <scope>3D-STRUCTURE MODELING</scope>
    <source>
        <tissue>Fruit</tissue>
    </source>
</reference>
<reference key="2">
    <citation type="journal article" date="2002" name="Biochem. J.">
        <title>Mutational analysis of the carbohydrate-binding activity of the NeuAc(alpha-2,6)Gal/GalNAc-specific type 2 ribosome-inactivating protein from elderberry (Sambucus nigra) fruits.</title>
        <authorList>
            <person name="Chen Y."/>
            <person name="Rouge P."/>
            <person name="Peumans W.J."/>
            <person name="van Damme E.J."/>
        </authorList>
    </citation>
    <scope>FUNCTION</scope>
    <scope>DOMAIN</scope>
    <scope>MUTAGENESIS OF ASN-356 AND ASP-539</scope>
    <scope>3D-STRUCTURE MODELING</scope>
</reference>
<reference key="3">
    <citation type="journal article" date="2008" name="Phytochemistry">
        <title>Carbohydrate-binding activity of the type-2 ribosome-inactivating protein SNA-I from elderberry (Sambucus nigra) is a determining factor for its insecticidal activity.</title>
        <authorList>
            <person name="Shahidi-Noghabi S."/>
            <person name="Van Damme E.J."/>
            <person name="Smagghe G."/>
        </authorList>
    </citation>
    <scope>FUNCTION</scope>
</reference>
<dbReference type="EC" id="3.2.2.22" evidence="6"/>
<dbReference type="EMBL" id="AF012899">
    <property type="protein sequence ID" value="AAC49989.1"/>
    <property type="molecule type" value="mRNA"/>
</dbReference>
<dbReference type="SMR" id="O22415"/>
<dbReference type="GlyCosmos" id="O22415">
    <property type="glycosylation" value="7 sites, No reported glycans"/>
</dbReference>
<dbReference type="GO" id="GO:0030246">
    <property type="term" value="F:carbohydrate binding"/>
    <property type="evidence" value="ECO:0007669"/>
    <property type="project" value="UniProtKB-KW"/>
</dbReference>
<dbReference type="GO" id="GO:0000166">
    <property type="term" value="F:nucleotide binding"/>
    <property type="evidence" value="ECO:0007669"/>
    <property type="project" value="UniProtKB-KW"/>
</dbReference>
<dbReference type="GO" id="GO:0030598">
    <property type="term" value="F:rRNA N-glycosylase activity"/>
    <property type="evidence" value="ECO:0007669"/>
    <property type="project" value="UniProtKB-EC"/>
</dbReference>
<dbReference type="GO" id="GO:0090729">
    <property type="term" value="F:toxin activity"/>
    <property type="evidence" value="ECO:0007669"/>
    <property type="project" value="UniProtKB-KW"/>
</dbReference>
<dbReference type="GO" id="GO:0006952">
    <property type="term" value="P:defense response"/>
    <property type="evidence" value="ECO:0007669"/>
    <property type="project" value="UniProtKB-KW"/>
</dbReference>
<dbReference type="GO" id="GO:0017148">
    <property type="term" value="P:negative regulation of translation"/>
    <property type="evidence" value="ECO:0007669"/>
    <property type="project" value="UniProtKB-KW"/>
</dbReference>
<dbReference type="CDD" id="cd23483">
    <property type="entry name" value="beta-trefoil_Ricin_ebulin-like_rpt1"/>
    <property type="match status" value="1"/>
</dbReference>
<dbReference type="CDD" id="cd23490">
    <property type="entry name" value="beta-trefoil_Ricin_ebulin-like_rpt2"/>
    <property type="match status" value="1"/>
</dbReference>
<dbReference type="Gene3D" id="2.80.10.50">
    <property type="match status" value="2"/>
</dbReference>
<dbReference type="Gene3D" id="3.40.420.10">
    <property type="entry name" value="Ricin (A subunit), domain 1"/>
    <property type="match status" value="1"/>
</dbReference>
<dbReference type="Gene3D" id="4.10.470.10">
    <property type="entry name" value="Ricin (A Subunit), domain 2"/>
    <property type="match status" value="1"/>
</dbReference>
<dbReference type="InterPro" id="IPR036041">
    <property type="entry name" value="Ribosome-inact_prot_sf"/>
</dbReference>
<dbReference type="InterPro" id="IPR017989">
    <property type="entry name" value="Ribosome_inactivat_1/2"/>
</dbReference>
<dbReference type="InterPro" id="IPR001574">
    <property type="entry name" value="Ribosome_inactivat_prot"/>
</dbReference>
<dbReference type="InterPro" id="IPR017988">
    <property type="entry name" value="Ribosome_inactivat_prot_CS"/>
</dbReference>
<dbReference type="InterPro" id="IPR016138">
    <property type="entry name" value="Ribosome_inactivat_prot_sub1"/>
</dbReference>
<dbReference type="InterPro" id="IPR016139">
    <property type="entry name" value="Ribosome_inactivat_prot_sub2"/>
</dbReference>
<dbReference type="InterPro" id="IPR035992">
    <property type="entry name" value="Ricin_B-like_lectins"/>
</dbReference>
<dbReference type="InterPro" id="IPR000772">
    <property type="entry name" value="Ricin_B_lectin"/>
</dbReference>
<dbReference type="PANTHER" id="PTHR33453">
    <property type="match status" value="1"/>
</dbReference>
<dbReference type="PANTHER" id="PTHR33453:SF34">
    <property type="entry name" value="RIBOSOME-INACTIVATING PROTEIN"/>
    <property type="match status" value="1"/>
</dbReference>
<dbReference type="Pfam" id="PF00652">
    <property type="entry name" value="Ricin_B_lectin"/>
    <property type="match status" value="2"/>
</dbReference>
<dbReference type="Pfam" id="PF00161">
    <property type="entry name" value="RIP"/>
    <property type="match status" value="1"/>
</dbReference>
<dbReference type="PRINTS" id="PR00396">
    <property type="entry name" value="SHIGARICIN"/>
</dbReference>
<dbReference type="SMART" id="SM00458">
    <property type="entry name" value="RICIN"/>
    <property type="match status" value="2"/>
</dbReference>
<dbReference type="SUPFAM" id="SSF56371">
    <property type="entry name" value="Ribosome inactivating proteins (RIP)"/>
    <property type="match status" value="1"/>
</dbReference>
<dbReference type="SUPFAM" id="SSF50370">
    <property type="entry name" value="Ricin B-like lectins"/>
    <property type="match status" value="2"/>
</dbReference>
<dbReference type="PROSITE" id="PS50231">
    <property type="entry name" value="RICIN_B_LECTIN"/>
    <property type="match status" value="2"/>
</dbReference>
<dbReference type="PROSITE" id="PS00275">
    <property type="entry name" value="SHIGA_RICIN"/>
    <property type="match status" value="1"/>
</dbReference>
<keyword id="KW-0903">Direct protein sequencing</keyword>
<keyword id="KW-1015">Disulfide bond</keyword>
<keyword id="KW-0325">Glycoprotein</keyword>
<keyword id="KW-0378">Hydrolase</keyword>
<keyword id="KW-0430">Lectin</keyword>
<keyword id="KW-0547">Nucleotide-binding</keyword>
<keyword id="KW-0611">Plant defense</keyword>
<keyword id="KW-0652">Protein synthesis inhibitor</keyword>
<keyword id="KW-0677">Repeat</keyword>
<keyword id="KW-0732">Signal</keyword>
<keyword id="KW-0800">Toxin</keyword>
<sequence length="570" mass="62752">MRVVTKLLYLVVLAICGLGIHGALTHTRVTPPVYPSVSFNLTGADTYGPFLRALQEKVILGNHTAFDLPVLNPESQVSDSNRFVLVPLTNPSGDTVTLAIDVVNLYVVAFSSNGRSYFFSGSTAVQRDNLFVDTTQEELNFTGNYISLERQVGFGRVYIPLGPKSLAQAISSLRTYTLSAGDTKPLARGLLVVIQMVSEAARFRYIELRIRTSITDASEFTPDLLMLSMENNWSSMSSEIQQAQPGGIFPGVVQLRDERNNPIEVTNFRRLFELTYIAVLLYGCAPVTSNSYTNNAIDAQIIKMPVFRGGGYEKVCSVVEVTRRISGWDGLCVDVRDGHYIDGNTVQLGPCGNECNQLWTFRTDGTIRWLGKCLTTSSSVMIYDCNTVPPEATKWVVSTDGTITNPRSGLVLTAPQAAEGTALSLENNIHAARQGWTVGDVEPLVTFIVGYKQMCLTENGENNFVWLEDCVLNRVEQEWALYGDGTIRVNSNRSLCVTSEDHEPSDLIVILKCEGSGNQRWVFNTNGTISNPNAKLVMDVAQSNVSLRKIILYPPTGNPNQQWITTTQPA</sequence>
<evidence type="ECO:0000250" key="1">
    <source>
        <dbReference type="UniProtKB" id="P02879"/>
    </source>
</evidence>
<evidence type="ECO:0000250" key="2">
    <source>
        <dbReference type="UniProtKB" id="P93543"/>
    </source>
</evidence>
<evidence type="ECO:0000250" key="3">
    <source>
        <dbReference type="UniProtKB" id="Q41358"/>
    </source>
</evidence>
<evidence type="ECO:0000255" key="4">
    <source>
        <dbReference type="PROSITE-ProRule" id="PRU00174"/>
    </source>
</evidence>
<evidence type="ECO:0000255" key="5">
    <source>
        <dbReference type="PROSITE-ProRule" id="PRU00498"/>
    </source>
</evidence>
<evidence type="ECO:0000255" key="6">
    <source>
        <dbReference type="RuleBase" id="RU004915"/>
    </source>
</evidence>
<evidence type="ECO:0000269" key="7">
    <source>
    </source>
</evidence>
<evidence type="ECO:0000269" key="8">
    <source>
    </source>
</evidence>
<evidence type="ECO:0000269" key="9">
    <source>
    </source>
</evidence>
<evidence type="ECO:0000303" key="10">
    <source>
    </source>
</evidence>
<evidence type="ECO:0000303" key="11">
    <source>
    </source>
</evidence>
<evidence type="ECO:0000305" key="12"/>
<evidence type="ECO:0000305" key="13">
    <source>
    </source>
</evidence>
<evidence type="ECO:0000305" key="14">
    <source>
    </source>
</evidence>
<protein>
    <recommendedName>
        <fullName evidence="11">Ribosome-inactivating protein SNAIf</fullName>
    </recommendedName>
    <alternativeName>
        <fullName>Agglutinin I</fullName>
    </alternativeName>
    <component>
        <recommendedName>
            <fullName evidence="11">SNAIf-A chain</fullName>
            <ecNumber evidence="6">3.2.2.22</ecNumber>
        </recommendedName>
        <alternativeName>
            <fullName evidence="6">rRNA N-glycosidase</fullName>
        </alternativeName>
    </component>
    <component>
        <recommendedName>
            <fullName>Linker peptide</fullName>
        </recommendedName>
    </component>
    <component>
        <recommendedName>
            <fullName evidence="11">SNAIf-B chain</fullName>
        </recommendedName>
    </component>
    <component>
        <recommendedName>
            <fullName evidence="11">TrSNAIf</fullName>
        </recommendedName>
    </component>
</protein>
<organism>
    <name type="scientific">Sambucus nigra</name>
    <name type="common">European elder</name>
    <dbReference type="NCBI Taxonomy" id="4202"/>
    <lineage>
        <taxon>Eukaryota</taxon>
        <taxon>Viridiplantae</taxon>
        <taxon>Streptophyta</taxon>
        <taxon>Embryophyta</taxon>
        <taxon>Tracheophyta</taxon>
        <taxon>Spermatophyta</taxon>
        <taxon>Magnoliopsida</taxon>
        <taxon>eudicotyledons</taxon>
        <taxon>Gunneridae</taxon>
        <taxon>Pentapetalae</taxon>
        <taxon>asterids</taxon>
        <taxon>campanulids</taxon>
        <taxon>Dipsacales</taxon>
        <taxon>Adoxaceae</taxon>
        <taxon>Sambucus</taxon>
    </lineage>
</organism>
<accession>O22415</accession>